<feature type="chain" id="PRO_0000284361" description="Myotubularin-related protein 10">
    <location>
        <begin position="1"/>
        <end position="771"/>
    </location>
</feature>
<feature type="domain" description="Myotubularin phosphatase" evidence="2">
    <location>
        <begin position="217"/>
        <end position="657"/>
    </location>
</feature>
<feature type="modified residue" description="Phosphoserine" evidence="1">
    <location>
        <position position="603"/>
    </location>
</feature>
<feature type="modified residue" description="Phosphoserine" evidence="1">
    <location>
        <position position="745"/>
    </location>
</feature>
<dbReference type="EMBL" id="CN669724">
    <property type="status" value="NOT_ANNOTATED_CDS"/>
    <property type="molecule type" value="mRNA"/>
</dbReference>
<dbReference type="EMBL" id="BC055074">
    <property type="protein sequence ID" value="AAH55074.1"/>
    <property type="status" value="ALT_SEQ"/>
    <property type="molecule type" value="mRNA"/>
</dbReference>
<dbReference type="EMBL" id="BC058196">
    <property type="protein sequence ID" value="AAH58196.1"/>
    <property type="molecule type" value="mRNA"/>
</dbReference>
<dbReference type="CCDS" id="CCDS39976.1"/>
<dbReference type="RefSeq" id="NP_766330.2">
    <property type="nucleotide sequence ID" value="NM_172742.3"/>
</dbReference>
<dbReference type="SMR" id="Q7TPM9"/>
<dbReference type="BioGRID" id="231402">
    <property type="interactions" value="1"/>
</dbReference>
<dbReference type="FunCoup" id="Q7TPM9">
    <property type="interactions" value="2727"/>
</dbReference>
<dbReference type="STRING" id="10090.ENSMUSP00000032736"/>
<dbReference type="GlyGen" id="Q7TPM9">
    <property type="glycosylation" value="1 site, 1 N-linked glycan (1 site)"/>
</dbReference>
<dbReference type="iPTMnet" id="Q7TPM9"/>
<dbReference type="PhosphoSitePlus" id="Q7TPM9"/>
<dbReference type="jPOST" id="Q7TPM9"/>
<dbReference type="PaxDb" id="10090-ENSMUSP00000032736"/>
<dbReference type="PeptideAtlas" id="Q7TPM9"/>
<dbReference type="ProteomicsDB" id="291456"/>
<dbReference type="Pumba" id="Q7TPM9"/>
<dbReference type="Antibodypedia" id="65234">
    <property type="antibodies" value="29 antibodies from 12 providers"/>
</dbReference>
<dbReference type="DNASU" id="233315"/>
<dbReference type="Ensembl" id="ENSMUST00000032736.11">
    <property type="protein sequence ID" value="ENSMUSP00000032736.5"/>
    <property type="gene ID" value="ENSMUSG00000030522.15"/>
</dbReference>
<dbReference type="GeneID" id="233315"/>
<dbReference type="KEGG" id="mmu:233315"/>
<dbReference type="UCSC" id="uc009hgd.1">
    <property type="organism name" value="mouse"/>
</dbReference>
<dbReference type="AGR" id="MGI:2142292"/>
<dbReference type="CTD" id="54893"/>
<dbReference type="MGI" id="MGI:2142292">
    <property type="gene designation" value="Mtmr10"/>
</dbReference>
<dbReference type="VEuPathDB" id="HostDB:ENSMUSG00000030522"/>
<dbReference type="eggNOG" id="KOG1089">
    <property type="taxonomic scope" value="Eukaryota"/>
</dbReference>
<dbReference type="GeneTree" id="ENSGT00940000156900"/>
<dbReference type="HOGENOM" id="CLU_021912_1_0_1"/>
<dbReference type="InParanoid" id="Q7TPM9"/>
<dbReference type="OMA" id="SVPQDRF"/>
<dbReference type="OrthoDB" id="271628at2759"/>
<dbReference type="PhylomeDB" id="Q7TPM9"/>
<dbReference type="TreeFam" id="TF315197"/>
<dbReference type="BioGRID-ORCS" id="233315">
    <property type="hits" value="4 hits in 78 CRISPR screens"/>
</dbReference>
<dbReference type="ChiTaRS" id="Mtmr10">
    <property type="organism name" value="mouse"/>
</dbReference>
<dbReference type="PRO" id="PR:Q7TPM9"/>
<dbReference type="Proteomes" id="UP000000589">
    <property type="component" value="Chromosome 7"/>
</dbReference>
<dbReference type="RNAct" id="Q7TPM9">
    <property type="molecule type" value="protein"/>
</dbReference>
<dbReference type="Bgee" id="ENSMUSG00000030522">
    <property type="expression patterns" value="Expressed in vestibular membrane of cochlear duct and 262 other cell types or tissues"/>
</dbReference>
<dbReference type="ExpressionAtlas" id="Q7TPM9">
    <property type="expression patterns" value="baseline and differential"/>
</dbReference>
<dbReference type="GO" id="GO:0005737">
    <property type="term" value="C:cytoplasm"/>
    <property type="evidence" value="ECO:0007669"/>
    <property type="project" value="Ensembl"/>
</dbReference>
<dbReference type="CDD" id="cd13346">
    <property type="entry name" value="PH-GRAM_MTMR10"/>
    <property type="match status" value="1"/>
</dbReference>
<dbReference type="CDD" id="cd14593">
    <property type="entry name" value="PTP-MTMR10"/>
    <property type="match status" value="1"/>
</dbReference>
<dbReference type="FunFam" id="2.30.29.30:FF:000198">
    <property type="entry name" value="Myotubularin related protein 10"/>
    <property type="match status" value="1"/>
</dbReference>
<dbReference type="Gene3D" id="2.30.29.30">
    <property type="entry name" value="Pleckstrin-homology domain (PH domain)/Phosphotyrosine-binding domain (PTB)"/>
    <property type="match status" value="1"/>
</dbReference>
<dbReference type="InterPro" id="IPR036004">
    <property type="entry name" value="MTMR10_PH-GRAM"/>
</dbReference>
<dbReference type="InterPro" id="IPR030573">
    <property type="entry name" value="MTMR10_PTP"/>
</dbReference>
<dbReference type="InterPro" id="IPR022587">
    <property type="entry name" value="MTMR12-like_C"/>
</dbReference>
<dbReference type="InterPro" id="IPR030564">
    <property type="entry name" value="Myotubularin"/>
</dbReference>
<dbReference type="InterPro" id="IPR010569">
    <property type="entry name" value="Myotubularin-like_Pase_dom"/>
</dbReference>
<dbReference type="InterPro" id="IPR011993">
    <property type="entry name" value="PH-like_dom_sf"/>
</dbReference>
<dbReference type="InterPro" id="IPR029021">
    <property type="entry name" value="Prot-tyrosine_phosphatase-like"/>
</dbReference>
<dbReference type="PANTHER" id="PTHR10807">
    <property type="entry name" value="MYOTUBULARIN-RELATED"/>
    <property type="match status" value="1"/>
</dbReference>
<dbReference type="PANTHER" id="PTHR10807:SF39">
    <property type="entry name" value="MYOTUBULARIN-RELATED PROTEIN 10"/>
    <property type="match status" value="1"/>
</dbReference>
<dbReference type="Pfam" id="PF12578">
    <property type="entry name" value="3-PAP"/>
    <property type="match status" value="1"/>
</dbReference>
<dbReference type="Pfam" id="PF06602">
    <property type="entry name" value="Myotub-related"/>
    <property type="match status" value="2"/>
</dbReference>
<dbReference type="SUPFAM" id="SSF52799">
    <property type="entry name" value="(Phosphotyrosine protein) phosphatases II"/>
    <property type="match status" value="1"/>
</dbReference>
<dbReference type="SUPFAM" id="SSF50729">
    <property type="entry name" value="PH domain-like"/>
    <property type="match status" value="1"/>
</dbReference>
<dbReference type="PROSITE" id="PS51339">
    <property type="entry name" value="PPASE_MYOTUBULARIN"/>
    <property type="match status" value="1"/>
</dbReference>
<gene>
    <name type="primary">Mtmr10</name>
</gene>
<organism>
    <name type="scientific">Mus musculus</name>
    <name type="common">Mouse</name>
    <dbReference type="NCBI Taxonomy" id="10090"/>
    <lineage>
        <taxon>Eukaryota</taxon>
        <taxon>Metazoa</taxon>
        <taxon>Chordata</taxon>
        <taxon>Craniata</taxon>
        <taxon>Vertebrata</taxon>
        <taxon>Euteleostomi</taxon>
        <taxon>Mammalia</taxon>
        <taxon>Eutheria</taxon>
        <taxon>Euarchontoglires</taxon>
        <taxon>Glires</taxon>
        <taxon>Rodentia</taxon>
        <taxon>Myomorpha</taxon>
        <taxon>Muroidea</taxon>
        <taxon>Muridae</taxon>
        <taxon>Murinae</taxon>
        <taxon>Mus</taxon>
        <taxon>Mus</taxon>
    </lineage>
</organism>
<protein>
    <recommendedName>
        <fullName>Myotubularin-related protein 10</fullName>
    </recommendedName>
    <alternativeName>
        <fullName evidence="3">Inactive phosphatidylinositol 3-phosphatase 10</fullName>
    </alternativeName>
</protein>
<proteinExistence type="evidence at protein level"/>
<comment type="similarity">
    <text evidence="3">Belongs to the protein-tyrosine phosphatase family. Non-receptor class myotubularin subfamily.</text>
</comment>
<comment type="caution">
    <text evidence="3">Although it belongs to the non-receptor class myotubularin subfamily, lacks the conserved active site cysteine residue at position 399 in the dsPTPase catalytic loop, suggesting that it has no phosphatase activity.</text>
</comment>
<comment type="sequence caution" evidence="3">
    <conflict type="miscellaneous discrepancy">
        <sequence resource="EMBL-CDS" id="AAH55074"/>
    </conflict>
    <text>Sequence of unknown origin in the N-terminal part.</text>
</comment>
<keyword id="KW-0597">Phosphoprotein</keyword>
<keyword id="KW-1185">Reference proteome</keyword>
<name>MTMRA_MOUSE</name>
<accession>Q7TPM9</accession>
<accession>Q6PE99</accession>
<sequence>MFSLKPPRPSFRSYLLPPAQTDDKISSEPKIKKLEPVLLPGEIVVNEVNFVRKCIATDTSQYDLWGKLICSNFKISFITDDPMPLQKFHYRNLLLGEHDVPLTCIEQIVTVNDHKRKQKVLGPNQKLKFNPTELIIYCKDFRIVRFRFDESGPESAKKVCLAIAHYSQPTDLQLLFAFEYVGKKYHNSANKVNGVSSGGGGVWSGAGSTGSQRTPLFETYSDWDRETKRTGASGWRVCSINEGYMISTCLPEYFVVPSSLADQDLKIFSHSFVGRRMPFWCWSHSNGSALVRMALIKDALQQRKIDQRICNAITKSHPQRSDVYKSDLDKALPNIQEIQAAFVKLKQLCVNEPFEETEEKWLSSLESTRWLEYVRAFLKHSAELVYILESQRLSVVLQEEEGRDLSCLVASLIQVMMDPYFRTITGFQSLIQKEWVMAGYQFLDRCNHLKRSEKESPLFLLFLDTTWQLLEQYPAAFEFSETYLAVLCDSTRISLFGTFLFNSPHQRVKQSTEFAISKNIQLGDEKGLKFPSVWDWALQFTAKDRTLFHNPFYIGKSTPCVQNGSRKSFKRTKKSYSSTLRGMPSCLKNGIITDQDLLPRRNSLVLKLKPDPPQHTDSQHSGAEQYFKEWFSRPANLHGIILPRLSGTHIKLWKLCYFRWVPEAQINLGGSIMAFHKLSLLADEVDMLSRMLRQHRSGPLEACYAELDQSRMYFRATGPHDTLGTPEFLSSSFPFSPVGNLCRRSILGTPLSKFLSGAKIWLSTETLANED</sequence>
<evidence type="ECO:0000250" key="1">
    <source>
        <dbReference type="UniProtKB" id="Q9NXD2"/>
    </source>
</evidence>
<evidence type="ECO:0000255" key="2">
    <source>
        <dbReference type="PROSITE-ProRule" id="PRU00669"/>
    </source>
</evidence>
<evidence type="ECO:0000305" key="3"/>
<reference key="1">
    <citation type="journal article" date="2003" name="PLoS Biol.">
        <title>Transcriptome analysis of mouse stem cells and early embryos.</title>
        <authorList>
            <person name="Sharov A.A."/>
            <person name="Piao Y."/>
            <person name="Matoba R."/>
            <person name="Dudekula D.B."/>
            <person name="Qian Y."/>
            <person name="VanBuren V."/>
            <person name="Falco G."/>
            <person name="Martin P.R."/>
            <person name="Stagg C.A."/>
            <person name="Bassey U.C."/>
            <person name="Wang Y."/>
            <person name="Carter M.G."/>
            <person name="Hamatani T."/>
            <person name="Aiba K."/>
            <person name="Akutsu H."/>
            <person name="Sharova L."/>
            <person name="Tanaka T.S."/>
            <person name="Kimber W.L."/>
            <person name="Yoshikawa T."/>
            <person name="Jaradat S.A."/>
            <person name="Pantano S."/>
            <person name="Nagaraja R."/>
            <person name="Boheler K.R."/>
            <person name="Taub D."/>
            <person name="Hodes R.J."/>
            <person name="Longo D.L."/>
            <person name="Schlessinger D."/>
            <person name="Keller J."/>
            <person name="Klotz E."/>
            <person name="Kelsoe G."/>
            <person name="Umezawa A."/>
            <person name="Vescovi A.L."/>
            <person name="Rossant J."/>
            <person name="Kunath T."/>
            <person name="Hogan B.L.M."/>
            <person name="Curci A."/>
            <person name="D'Urso M."/>
            <person name="Kelso J."/>
            <person name="Hide W."/>
            <person name="Ko M.S.H."/>
        </authorList>
    </citation>
    <scope>NUCLEOTIDE SEQUENCE [LARGE SCALE MRNA] OF 1-127</scope>
</reference>
<reference key="2">
    <citation type="journal article" date="2004" name="Genome Res.">
        <title>The status, quality, and expansion of the NIH full-length cDNA project: the Mammalian Gene Collection (MGC).</title>
        <authorList>
            <consortium name="The MGC Project Team"/>
        </authorList>
    </citation>
    <scope>NUCLEOTIDE SEQUENCE [LARGE SCALE MRNA] OF 80-771</scope>
    <source>
        <strain>C57BL/6J</strain>
        <strain>FVB/N</strain>
        <tissue>Egg</tissue>
        <tissue>Mammary tumor</tissue>
    </source>
</reference>
<reference key="3">
    <citation type="journal article" date="2010" name="Cell">
        <title>A tissue-specific atlas of mouse protein phosphorylation and expression.</title>
        <authorList>
            <person name="Huttlin E.L."/>
            <person name="Jedrychowski M.P."/>
            <person name="Elias J.E."/>
            <person name="Goswami T."/>
            <person name="Rad R."/>
            <person name="Beausoleil S.A."/>
            <person name="Villen J."/>
            <person name="Haas W."/>
            <person name="Sowa M.E."/>
            <person name="Gygi S.P."/>
        </authorList>
    </citation>
    <scope>IDENTIFICATION BY MASS SPECTROMETRY [LARGE SCALE ANALYSIS]</scope>
    <source>
        <tissue>Pancreas</tissue>
    </source>
</reference>